<dbReference type="EC" id="1.3.3.5"/>
<dbReference type="EMBL" id="D14081">
    <property type="protein sequence ID" value="BAA03166.1"/>
    <property type="molecule type" value="Genomic_DNA"/>
</dbReference>
<dbReference type="EMBL" id="D12579">
    <property type="protein sequence ID" value="BAA02123.1"/>
    <property type="molecule type" value="mRNA"/>
</dbReference>
<dbReference type="PIR" id="B48521">
    <property type="entry name" value="B48521"/>
</dbReference>
<dbReference type="PDB" id="2XLL">
    <property type="method" value="X-ray"/>
    <property type="resolution" value="2.30 A"/>
    <property type="chains" value="A/B/C/D=39-572"/>
</dbReference>
<dbReference type="PDB" id="3ABG">
    <property type="method" value="X-ray"/>
    <property type="resolution" value="2.30 A"/>
    <property type="chains" value="A/B=39-572"/>
</dbReference>
<dbReference type="PDB" id="6I3J">
    <property type="method" value="X-ray"/>
    <property type="resolution" value="2.59 A"/>
    <property type="chains" value="A/B=39-572"/>
</dbReference>
<dbReference type="PDB" id="6I3K">
    <property type="method" value="X-ray"/>
    <property type="resolution" value="1.60 A"/>
    <property type="chains" value="A/B=39-572"/>
</dbReference>
<dbReference type="PDB" id="6I3L">
    <property type="method" value="X-ray"/>
    <property type="resolution" value="2.10 A"/>
    <property type="chains" value="A/B=39-572"/>
</dbReference>
<dbReference type="PDB" id="6IQX">
    <property type="method" value="X-ray"/>
    <property type="resolution" value="1.43 A"/>
    <property type="chains" value="A/B=39-572"/>
</dbReference>
<dbReference type="PDB" id="6IQY">
    <property type="method" value="X-ray"/>
    <property type="resolution" value="1.60 A"/>
    <property type="chains" value="A/B=39-572"/>
</dbReference>
<dbReference type="PDB" id="6IQZ">
    <property type="method" value="X-ray"/>
    <property type="resolution" value="1.46 A"/>
    <property type="chains" value="A=39-572"/>
</dbReference>
<dbReference type="PDBsum" id="2XLL"/>
<dbReference type="PDBsum" id="3ABG"/>
<dbReference type="PDBsum" id="6I3J"/>
<dbReference type="PDBsum" id="6I3K"/>
<dbReference type="PDBsum" id="6I3L"/>
<dbReference type="PDBsum" id="6IQX"/>
<dbReference type="PDBsum" id="6IQY"/>
<dbReference type="PDBsum" id="6IQZ"/>
<dbReference type="SMR" id="Q12737"/>
<dbReference type="KEGG" id="ag:BAA03166"/>
<dbReference type="BRENDA" id="1.3.3.5">
    <property type="organism ID" value="3537"/>
</dbReference>
<dbReference type="EvolutionaryTrace" id="Q12737"/>
<dbReference type="GO" id="GO:0047705">
    <property type="term" value="F:bilirubin oxidase activity"/>
    <property type="evidence" value="ECO:0007669"/>
    <property type="project" value="UniProtKB-EC"/>
</dbReference>
<dbReference type="GO" id="GO:0005507">
    <property type="term" value="F:copper ion binding"/>
    <property type="evidence" value="ECO:0007669"/>
    <property type="project" value="InterPro"/>
</dbReference>
<dbReference type="CDD" id="cd13844">
    <property type="entry name" value="CuRO_1_BOD_CotA_like"/>
    <property type="match status" value="1"/>
</dbReference>
<dbReference type="CDD" id="cd13866">
    <property type="entry name" value="CuRO_2_BOD"/>
    <property type="match status" value="1"/>
</dbReference>
<dbReference type="CDD" id="cd13889">
    <property type="entry name" value="CuRO_3_BOD"/>
    <property type="match status" value="1"/>
</dbReference>
<dbReference type="Gene3D" id="2.60.40.420">
    <property type="entry name" value="Cupredoxins - blue copper proteins"/>
    <property type="match status" value="3"/>
</dbReference>
<dbReference type="InterPro" id="IPR011707">
    <property type="entry name" value="Cu-oxidase-like_N"/>
</dbReference>
<dbReference type="InterPro" id="IPR011706">
    <property type="entry name" value="Cu-oxidase_C"/>
</dbReference>
<dbReference type="InterPro" id="IPR045087">
    <property type="entry name" value="Cu-oxidase_fam"/>
</dbReference>
<dbReference type="InterPro" id="IPR008972">
    <property type="entry name" value="Cupredoxin"/>
</dbReference>
<dbReference type="PANTHER" id="PTHR48267:SF1">
    <property type="entry name" value="BILIRUBIN OXIDASE"/>
    <property type="match status" value="1"/>
</dbReference>
<dbReference type="PANTHER" id="PTHR48267">
    <property type="entry name" value="CUPREDOXIN SUPERFAMILY PROTEIN"/>
    <property type="match status" value="1"/>
</dbReference>
<dbReference type="Pfam" id="PF07731">
    <property type="entry name" value="Cu-oxidase_2"/>
    <property type="match status" value="1"/>
</dbReference>
<dbReference type="Pfam" id="PF07732">
    <property type="entry name" value="Cu-oxidase_3"/>
    <property type="match status" value="1"/>
</dbReference>
<dbReference type="SUPFAM" id="SSF49503">
    <property type="entry name" value="Cupredoxins"/>
    <property type="match status" value="3"/>
</dbReference>
<name>BLRO_ALBVE</name>
<reference key="1">
    <citation type="journal article" date="1993" name="J. Biol. Chem.">
        <title>Molecular cloning of the gene for bilirubin oxidase from Myrothecium verrucaria and its expression in yeast.</title>
        <authorList>
            <person name="Koikeda S."/>
            <person name="Ando K."/>
            <person name="Kaji H."/>
            <person name="Inoue T."/>
            <person name="Murao S."/>
            <person name="Takeuchi K."/>
            <person name="Samejima T."/>
        </authorList>
    </citation>
    <scope>NUCLEOTIDE SEQUENCE [GENOMIC DNA / MRNA]</scope>
    <scope>PARTIAL PROTEIN SEQUENCE</scope>
    <source>
        <strain>MT-1</strain>
    </source>
</reference>
<organism>
    <name type="scientific">Albifimbria verrucaria</name>
    <name type="common">Myrothecium leaf spot and pod blight fungus</name>
    <name type="synonym">Myrothecium verrucaria</name>
    <dbReference type="NCBI Taxonomy" id="1859699"/>
    <lineage>
        <taxon>Eukaryota</taxon>
        <taxon>Fungi</taxon>
        <taxon>Dikarya</taxon>
        <taxon>Ascomycota</taxon>
        <taxon>Pezizomycotina</taxon>
        <taxon>Sordariomycetes</taxon>
        <taxon>Hypocreomycetidae</taxon>
        <taxon>Hypocreales</taxon>
        <taxon>Stachybotryaceae</taxon>
        <taxon>Albifimbria</taxon>
    </lineage>
</organism>
<proteinExistence type="evidence at protein level"/>
<sequence>MFKHTLGAAALSLLFNSNAVQASPVPETSPATGHLFKRVAQISPQYPMFTVPLPIPPVKQPRLTVTNPVNGQEIWYYEVEIKPFTHQVYPDLGSADLVGYDGMSPGPTFQVPRGVETVVRFINNAEAPNSVHLHGSFSRAAFDGWAEDITEPGSFKDYYYPNRQSARTLWYHDHAMHITAENAYRGQAGLYMLTDPAEDALNLPSGYGEFDIPMILTSKQYTANGNLVTTNGELNSFWGDVIHVNGQPWPFKNVEPRKYRFRFLDAAVSRSFGLYFADTDAIDTRLPFKVIASDSGLLEHPADTSLLYISMAERYEVVFDFSDYAGKTIELRNLGGSIGGIGTDTDYDNTDKVMRFVVADDTTQPDTSVVPANLRDVPFPSPTTNTPRQFRFGRTGPTWTINGVAFADVQNRLLANVPVGTVERWELINAGNGWTHPIHIHLVDFKVISRTSGNNARTVMPYESGLKDVVWLGRRETVVVEAHYAPFPGVYMFHCHNLIHEDHDMMAAFNATVLPDYGYNATVFVDPMEELWQARPYELGEFQAQSGQFSVQAVTERIQTMAEYRPYAAADE</sequence>
<keyword id="KW-0002">3D-structure</keyword>
<keyword id="KW-0165">Cleavage on pair of basic residues</keyword>
<keyword id="KW-0186">Copper</keyword>
<keyword id="KW-0903">Direct protein sequencing</keyword>
<keyword id="KW-0325">Glycoprotein</keyword>
<keyword id="KW-0479">Metal-binding</keyword>
<keyword id="KW-0560">Oxidoreductase</keyword>
<keyword id="KW-0677">Repeat</keyword>
<keyword id="KW-0732">Signal</keyword>
<comment type="function">
    <text>Oxidation of bilirubin and other tetrapyrroles.</text>
</comment>
<comment type="catalytic activity">
    <reaction>
        <text>2 (4Z,15Z)-bilirubin IXalpha + O2 = 2 biliverdin IXalpha + 2 H2O</text>
        <dbReference type="Rhea" id="RHEA:20980"/>
        <dbReference type="ChEBI" id="CHEBI:15377"/>
        <dbReference type="ChEBI" id="CHEBI:15379"/>
        <dbReference type="ChEBI" id="CHEBI:57977"/>
        <dbReference type="ChEBI" id="CHEBI:57991"/>
        <dbReference type="EC" id="1.3.3.5"/>
    </reaction>
</comment>
<comment type="cofactor">
    <cofactor evidence="1">
        <name>Cu cation</name>
        <dbReference type="ChEBI" id="CHEBI:23378"/>
    </cofactor>
    <text evidence="1">Binds 4 Cu cations per monomer.</text>
</comment>
<comment type="similarity">
    <text evidence="3">Belongs to the multicopper oxidase family.</text>
</comment>
<evidence type="ECO:0000250" key="1"/>
<evidence type="ECO:0000255" key="2"/>
<evidence type="ECO:0000305" key="3"/>
<evidence type="ECO:0007829" key="4">
    <source>
        <dbReference type="PDB" id="3ABG"/>
    </source>
</evidence>
<evidence type="ECO:0007829" key="5">
    <source>
        <dbReference type="PDB" id="6IQX"/>
    </source>
</evidence>
<evidence type="ECO:0007829" key="6">
    <source>
        <dbReference type="PDB" id="6IQY"/>
    </source>
</evidence>
<protein>
    <recommendedName>
        <fullName>Bilirubin oxidase</fullName>
        <ecNumber>1.3.3.5</ecNumber>
    </recommendedName>
</protein>
<accession>Q12737</accession>
<feature type="signal peptide" evidence="3">
    <location>
        <begin position="1"/>
        <end position="19"/>
    </location>
</feature>
<feature type="propeptide" id="PRO_0000002910">
    <location>
        <begin position="20"/>
        <end position="38"/>
    </location>
</feature>
<feature type="chain" id="PRO_0000002911" description="Bilirubin oxidase">
    <location>
        <begin position="39"/>
        <end position="572"/>
    </location>
</feature>
<feature type="domain" description="Plastocyanin-like 1">
    <location>
        <begin position="98"/>
        <end position="194"/>
    </location>
</feature>
<feature type="domain" description="Plastocyanin-like 2">
    <location>
        <begin position="404"/>
        <end position="526"/>
    </location>
</feature>
<feature type="binding site" description="type 2 copper site" evidence="1">
    <location>
        <position position="132"/>
    </location>
    <ligand>
        <name>Cu cation</name>
        <dbReference type="ChEBI" id="CHEBI:23378"/>
        <label>1</label>
    </ligand>
</feature>
<feature type="binding site" description="type 3 copper site" evidence="1">
    <location>
        <position position="134"/>
    </location>
    <ligand>
        <name>Cu cation</name>
        <dbReference type="ChEBI" id="CHEBI:23378"/>
        <label>2</label>
    </ligand>
</feature>
<feature type="binding site" description="type 3 copper site" evidence="1">
    <location>
        <position position="172"/>
    </location>
    <ligand>
        <name>Cu cation</name>
        <dbReference type="ChEBI" id="CHEBI:23378"/>
        <label>2</label>
    </ligand>
</feature>
<feature type="binding site" description="type 3 copper site" evidence="1">
    <location>
        <position position="174"/>
    </location>
    <ligand>
        <name>Cu cation</name>
        <dbReference type="ChEBI" id="CHEBI:23378"/>
        <label>3</label>
    </ligand>
</feature>
<feature type="binding site" description="type 1 copper site" evidence="1">
    <location>
        <position position="436"/>
    </location>
    <ligand>
        <name>Cu cation</name>
        <dbReference type="ChEBI" id="CHEBI:23378"/>
        <label>4</label>
    </ligand>
</feature>
<feature type="binding site" description="type 2 copper site" evidence="1">
    <location>
        <position position="439"/>
    </location>
    <ligand>
        <name>Cu cation</name>
        <dbReference type="ChEBI" id="CHEBI:23378"/>
        <label>1</label>
    </ligand>
</feature>
<feature type="binding site" description="type 3 copper site" evidence="1">
    <location>
        <position position="441"/>
    </location>
    <ligand>
        <name>Cu cation</name>
        <dbReference type="ChEBI" id="CHEBI:23378"/>
        <label>3</label>
    </ligand>
</feature>
<feature type="binding site" description="type 3 copper site" evidence="1">
    <location>
        <position position="494"/>
    </location>
    <ligand>
        <name>Cu cation</name>
        <dbReference type="ChEBI" id="CHEBI:23378"/>
        <label>3</label>
    </ligand>
</feature>
<feature type="binding site" description="type 1 copper site" evidence="1">
    <location>
        <position position="495"/>
    </location>
    <ligand>
        <name>Cu cation</name>
        <dbReference type="ChEBI" id="CHEBI:23378"/>
        <label>4</label>
    </ligand>
</feature>
<feature type="binding site" description="type 3 copper site" evidence="1">
    <location>
        <position position="496"/>
    </location>
    <ligand>
        <name>Cu cation</name>
        <dbReference type="ChEBI" id="CHEBI:23378"/>
        <label>2</label>
    </ligand>
</feature>
<feature type="binding site" description="type 1 copper site" evidence="1">
    <location>
        <position position="500"/>
    </location>
    <ligand>
        <name>Cu cation</name>
        <dbReference type="ChEBI" id="CHEBI:23378"/>
        <label>4</label>
    </ligand>
</feature>
<feature type="binding site" description="type 1 copper site" evidence="1">
    <location>
        <position position="505"/>
    </location>
    <ligand>
        <name>Cu cation</name>
        <dbReference type="ChEBI" id="CHEBI:23378"/>
        <label>4</label>
    </ligand>
</feature>
<feature type="glycosylation site" description="N-linked (GlcNAc...) asparagine" evidence="2">
    <location>
        <position position="510"/>
    </location>
</feature>
<feature type="glycosylation site" description="N-linked (GlcNAc...) asparagine" evidence="2">
    <location>
        <position position="520"/>
    </location>
</feature>
<feature type="strand" evidence="5">
    <location>
        <begin position="62"/>
        <end position="66"/>
    </location>
</feature>
<feature type="turn" evidence="5">
    <location>
        <begin position="68"/>
        <end position="70"/>
    </location>
</feature>
<feature type="strand" evidence="5">
    <location>
        <begin position="73"/>
        <end position="86"/>
    </location>
</feature>
<feature type="strand" evidence="4">
    <location>
        <begin position="89"/>
        <end position="92"/>
    </location>
</feature>
<feature type="strand" evidence="5">
    <location>
        <begin position="95"/>
        <end position="100"/>
    </location>
</feature>
<feature type="strand" evidence="5">
    <location>
        <begin position="104"/>
        <end position="112"/>
    </location>
</feature>
<feature type="strand" evidence="5">
    <location>
        <begin position="117"/>
        <end position="123"/>
    </location>
</feature>
<feature type="strand" evidence="5">
    <location>
        <begin position="125"/>
        <end position="127"/>
    </location>
</feature>
<feature type="strand" evidence="5">
    <location>
        <begin position="131"/>
        <end position="134"/>
    </location>
</feature>
<feature type="helix" evidence="5">
    <location>
        <begin position="140"/>
        <end position="142"/>
    </location>
</feature>
<feature type="strand" evidence="5">
    <location>
        <begin position="154"/>
        <end position="160"/>
    </location>
</feature>
<feature type="strand" evidence="5">
    <location>
        <begin position="166"/>
        <end position="173"/>
    </location>
</feature>
<feature type="turn" evidence="5">
    <location>
        <begin position="176"/>
        <end position="178"/>
    </location>
</feature>
<feature type="helix" evidence="5">
    <location>
        <begin position="179"/>
        <end position="184"/>
    </location>
</feature>
<feature type="strand" evidence="5">
    <location>
        <begin position="188"/>
        <end position="194"/>
    </location>
</feature>
<feature type="helix" evidence="5">
    <location>
        <begin position="196"/>
        <end position="201"/>
    </location>
</feature>
<feature type="turn" evidence="5">
    <location>
        <begin position="208"/>
        <end position="210"/>
    </location>
</feature>
<feature type="strand" evidence="5">
    <location>
        <begin position="211"/>
        <end position="219"/>
    </location>
</feature>
<feature type="strand" evidence="4">
    <location>
        <begin position="223"/>
        <end position="225"/>
    </location>
</feature>
<feature type="strand" evidence="5">
    <location>
        <begin position="240"/>
        <end position="244"/>
    </location>
</feature>
<feature type="strand" evidence="5">
    <location>
        <begin position="247"/>
        <end position="249"/>
    </location>
</feature>
<feature type="strand" evidence="5">
    <location>
        <begin position="251"/>
        <end position="254"/>
    </location>
</feature>
<feature type="strand" evidence="5">
    <location>
        <begin position="256"/>
        <end position="265"/>
    </location>
</feature>
<feature type="strand" evidence="5">
    <location>
        <begin position="272"/>
        <end position="278"/>
    </location>
</feature>
<feature type="helix" evidence="6">
    <location>
        <begin position="279"/>
        <end position="281"/>
    </location>
</feature>
<feature type="strand" evidence="5">
    <location>
        <begin position="288"/>
        <end position="293"/>
    </location>
</feature>
<feature type="strand" evidence="5">
    <location>
        <begin position="296"/>
        <end position="305"/>
    </location>
</feature>
<feature type="strand" evidence="5">
    <location>
        <begin position="307"/>
        <end position="309"/>
    </location>
</feature>
<feature type="strand" evidence="5">
    <location>
        <begin position="314"/>
        <end position="320"/>
    </location>
</feature>
<feature type="helix" evidence="5">
    <location>
        <begin position="321"/>
        <end position="324"/>
    </location>
</feature>
<feature type="strand" evidence="5">
    <location>
        <begin position="328"/>
        <end position="333"/>
    </location>
</feature>
<feature type="helix" evidence="5">
    <location>
        <begin position="335"/>
        <end position="339"/>
    </location>
</feature>
<feature type="turn" evidence="5">
    <location>
        <begin position="348"/>
        <end position="351"/>
    </location>
</feature>
<feature type="strand" evidence="5">
    <location>
        <begin position="352"/>
        <end position="358"/>
    </location>
</feature>
<feature type="strand" evidence="5">
    <location>
        <begin position="388"/>
        <end position="395"/>
    </location>
</feature>
<feature type="strand" evidence="5">
    <location>
        <begin position="398"/>
        <end position="401"/>
    </location>
</feature>
<feature type="turn" evidence="5">
    <location>
        <begin position="409"/>
        <end position="411"/>
    </location>
</feature>
<feature type="strand" evidence="5">
    <location>
        <begin position="413"/>
        <end position="418"/>
    </location>
</feature>
<feature type="strand" evidence="5">
    <location>
        <begin position="421"/>
        <end position="428"/>
    </location>
</feature>
<feature type="strand" evidence="5">
    <location>
        <begin position="436"/>
        <end position="442"/>
    </location>
</feature>
<feature type="strand" evidence="5">
    <location>
        <begin position="445"/>
        <end position="452"/>
    </location>
</feature>
<feature type="helix" evidence="5">
    <location>
        <begin position="461"/>
        <end position="463"/>
    </location>
</feature>
<feature type="strand" evidence="5">
    <location>
        <begin position="467"/>
        <end position="472"/>
    </location>
</feature>
<feature type="strand" evidence="5">
    <location>
        <begin position="476"/>
        <end position="484"/>
    </location>
</feature>
<feature type="strand" evidence="5">
    <location>
        <begin position="489"/>
        <end position="495"/>
    </location>
</feature>
<feature type="helix" evidence="5">
    <location>
        <begin position="498"/>
        <end position="502"/>
    </location>
</feature>
<feature type="strand" evidence="5">
    <location>
        <begin position="506"/>
        <end position="512"/>
    </location>
</feature>
<feature type="helix" evidence="5">
    <location>
        <begin position="521"/>
        <end position="523"/>
    </location>
</feature>
<feature type="helix" evidence="5">
    <location>
        <begin position="530"/>
        <end position="532"/>
    </location>
</feature>
<feature type="helix" evidence="5">
    <location>
        <begin position="539"/>
        <end position="544"/>
    </location>
</feature>
<feature type="helix" evidence="5">
    <location>
        <begin position="547"/>
        <end position="549"/>
    </location>
</feature>
<feature type="helix" evidence="5">
    <location>
        <begin position="551"/>
        <end position="563"/>
    </location>
</feature>
<feature type="helix" evidence="5">
    <location>
        <begin position="568"/>
        <end position="571"/>
    </location>
</feature>